<name>COAD_SHEPA</name>
<dbReference type="EC" id="2.7.7.3" evidence="1"/>
<dbReference type="EMBL" id="CP000851">
    <property type="protein sequence ID" value="ABV89417.1"/>
    <property type="molecule type" value="Genomic_DNA"/>
</dbReference>
<dbReference type="RefSeq" id="WP_012157295.1">
    <property type="nucleotide sequence ID" value="NC_009901.1"/>
</dbReference>
<dbReference type="SMR" id="A8HA30"/>
<dbReference type="STRING" id="398579.Spea_4107"/>
<dbReference type="KEGG" id="spl:Spea_4107"/>
<dbReference type="eggNOG" id="COG0669">
    <property type="taxonomic scope" value="Bacteria"/>
</dbReference>
<dbReference type="HOGENOM" id="CLU_100149_0_1_6"/>
<dbReference type="OrthoDB" id="9806661at2"/>
<dbReference type="UniPathway" id="UPA00241">
    <property type="reaction ID" value="UER00355"/>
</dbReference>
<dbReference type="Proteomes" id="UP000002608">
    <property type="component" value="Chromosome"/>
</dbReference>
<dbReference type="GO" id="GO:0005737">
    <property type="term" value="C:cytoplasm"/>
    <property type="evidence" value="ECO:0007669"/>
    <property type="project" value="UniProtKB-SubCell"/>
</dbReference>
<dbReference type="GO" id="GO:0005524">
    <property type="term" value="F:ATP binding"/>
    <property type="evidence" value="ECO:0007669"/>
    <property type="project" value="UniProtKB-KW"/>
</dbReference>
<dbReference type="GO" id="GO:0004595">
    <property type="term" value="F:pantetheine-phosphate adenylyltransferase activity"/>
    <property type="evidence" value="ECO:0007669"/>
    <property type="project" value="UniProtKB-UniRule"/>
</dbReference>
<dbReference type="GO" id="GO:0015937">
    <property type="term" value="P:coenzyme A biosynthetic process"/>
    <property type="evidence" value="ECO:0007669"/>
    <property type="project" value="UniProtKB-UniRule"/>
</dbReference>
<dbReference type="CDD" id="cd02163">
    <property type="entry name" value="PPAT"/>
    <property type="match status" value="1"/>
</dbReference>
<dbReference type="FunFam" id="3.40.50.620:FF:000012">
    <property type="entry name" value="Phosphopantetheine adenylyltransferase"/>
    <property type="match status" value="1"/>
</dbReference>
<dbReference type="Gene3D" id="3.40.50.620">
    <property type="entry name" value="HUPs"/>
    <property type="match status" value="1"/>
</dbReference>
<dbReference type="HAMAP" id="MF_00151">
    <property type="entry name" value="PPAT_bact"/>
    <property type="match status" value="1"/>
</dbReference>
<dbReference type="InterPro" id="IPR004821">
    <property type="entry name" value="Cyt_trans-like"/>
</dbReference>
<dbReference type="InterPro" id="IPR001980">
    <property type="entry name" value="PPAT"/>
</dbReference>
<dbReference type="InterPro" id="IPR014729">
    <property type="entry name" value="Rossmann-like_a/b/a_fold"/>
</dbReference>
<dbReference type="NCBIfam" id="TIGR01510">
    <property type="entry name" value="coaD_prev_kdtB"/>
    <property type="match status" value="1"/>
</dbReference>
<dbReference type="NCBIfam" id="TIGR00125">
    <property type="entry name" value="cyt_tran_rel"/>
    <property type="match status" value="1"/>
</dbReference>
<dbReference type="PANTHER" id="PTHR21342">
    <property type="entry name" value="PHOSPHOPANTETHEINE ADENYLYLTRANSFERASE"/>
    <property type="match status" value="1"/>
</dbReference>
<dbReference type="PANTHER" id="PTHR21342:SF1">
    <property type="entry name" value="PHOSPHOPANTETHEINE ADENYLYLTRANSFERASE"/>
    <property type="match status" value="1"/>
</dbReference>
<dbReference type="Pfam" id="PF01467">
    <property type="entry name" value="CTP_transf_like"/>
    <property type="match status" value="1"/>
</dbReference>
<dbReference type="PRINTS" id="PR01020">
    <property type="entry name" value="LPSBIOSNTHSS"/>
</dbReference>
<dbReference type="SUPFAM" id="SSF52374">
    <property type="entry name" value="Nucleotidylyl transferase"/>
    <property type="match status" value="1"/>
</dbReference>
<sequence>MHKRAIYPGTFDPVTNGHADLIERAANLFEHVIIGIAANPSKQPRFTLAERVELLKTVTAHLDNVEVVGFSGLLVDFAKDQNASVLVRGLRAVSDFEYEFQLANMNRRLSPDLESVFLTPAEENSFISSTLVKEVALHGGDVSQFVHIEVANALTKKAK</sequence>
<organism>
    <name type="scientific">Shewanella pealeana (strain ATCC 700345 / ANG-SQ1)</name>
    <dbReference type="NCBI Taxonomy" id="398579"/>
    <lineage>
        <taxon>Bacteria</taxon>
        <taxon>Pseudomonadati</taxon>
        <taxon>Pseudomonadota</taxon>
        <taxon>Gammaproteobacteria</taxon>
        <taxon>Alteromonadales</taxon>
        <taxon>Shewanellaceae</taxon>
        <taxon>Shewanella</taxon>
    </lineage>
</organism>
<protein>
    <recommendedName>
        <fullName evidence="1">Phosphopantetheine adenylyltransferase</fullName>
        <ecNumber evidence="1">2.7.7.3</ecNumber>
    </recommendedName>
    <alternativeName>
        <fullName evidence="1">Dephospho-CoA pyrophosphorylase</fullName>
    </alternativeName>
    <alternativeName>
        <fullName evidence="1">Pantetheine-phosphate adenylyltransferase</fullName>
        <shortName evidence="1">PPAT</shortName>
    </alternativeName>
</protein>
<evidence type="ECO:0000255" key="1">
    <source>
        <dbReference type="HAMAP-Rule" id="MF_00151"/>
    </source>
</evidence>
<gene>
    <name evidence="1" type="primary">coaD</name>
    <name type="ordered locus">Spea_4107</name>
</gene>
<comment type="function">
    <text evidence="1">Reversibly transfers an adenylyl group from ATP to 4'-phosphopantetheine, yielding dephospho-CoA (dPCoA) and pyrophosphate.</text>
</comment>
<comment type="catalytic activity">
    <reaction evidence="1">
        <text>(R)-4'-phosphopantetheine + ATP + H(+) = 3'-dephospho-CoA + diphosphate</text>
        <dbReference type="Rhea" id="RHEA:19801"/>
        <dbReference type="ChEBI" id="CHEBI:15378"/>
        <dbReference type="ChEBI" id="CHEBI:30616"/>
        <dbReference type="ChEBI" id="CHEBI:33019"/>
        <dbReference type="ChEBI" id="CHEBI:57328"/>
        <dbReference type="ChEBI" id="CHEBI:61723"/>
        <dbReference type="EC" id="2.7.7.3"/>
    </reaction>
</comment>
<comment type="cofactor">
    <cofactor evidence="1">
        <name>Mg(2+)</name>
        <dbReference type="ChEBI" id="CHEBI:18420"/>
    </cofactor>
</comment>
<comment type="pathway">
    <text evidence="1">Cofactor biosynthesis; coenzyme A biosynthesis; CoA from (R)-pantothenate: step 4/5.</text>
</comment>
<comment type="subunit">
    <text evidence="1">Homohexamer.</text>
</comment>
<comment type="subcellular location">
    <subcellularLocation>
        <location evidence="1">Cytoplasm</location>
    </subcellularLocation>
</comment>
<comment type="similarity">
    <text evidence="1">Belongs to the bacterial CoaD family.</text>
</comment>
<feature type="chain" id="PRO_1000076788" description="Phosphopantetheine adenylyltransferase">
    <location>
        <begin position="1"/>
        <end position="159"/>
    </location>
</feature>
<feature type="binding site" evidence="1">
    <location>
        <begin position="10"/>
        <end position="11"/>
    </location>
    <ligand>
        <name>ATP</name>
        <dbReference type="ChEBI" id="CHEBI:30616"/>
    </ligand>
</feature>
<feature type="binding site" evidence="1">
    <location>
        <position position="10"/>
    </location>
    <ligand>
        <name>substrate</name>
    </ligand>
</feature>
<feature type="binding site" evidence="1">
    <location>
        <position position="18"/>
    </location>
    <ligand>
        <name>ATP</name>
        <dbReference type="ChEBI" id="CHEBI:30616"/>
    </ligand>
</feature>
<feature type="binding site" evidence="1">
    <location>
        <position position="42"/>
    </location>
    <ligand>
        <name>substrate</name>
    </ligand>
</feature>
<feature type="binding site" evidence="1">
    <location>
        <position position="74"/>
    </location>
    <ligand>
        <name>substrate</name>
    </ligand>
</feature>
<feature type="binding site" evidence="1">
    <location>
        <position position="88"/>
    </location>
    <ligand>
        <name>substrate</name>
    </ligand>
</feature>
<feature type="binding site" evidence="1">
    <location>
        <begin position="89"/>
        <end position="91"/>
    </location>
    <ligand>
        <name>ATP</name>
        <dbReference type="ChEBI" id="CHEBI:30616"/>
    </ligand>
</feature>
<feature type="binding site" evidence="1">
    <location>
        <position position="99"/>
    </location>
    <ligand>
        <name>ATP</name>
        <dbReference type="ChEBI" id="CHEBI:30616"/>
    </ligand>
</feature>
<feature type="binding site" evidence="1">
    <location>
        <begin position="124"/>
        <end position="130"/>
    </location>
    <ligand>
        <name>ATP</name>
        <dbReference type="ChEBI" id="CHEBI:30616"/>
    </ligand>
</feature>
<feature type="site" description="Transition state stabilizer" evidence="1">
    <location>
        <position position="18"/>
    </location>
</feature>
<accession>A8HA30</accession>
<keyword id="KW-0067">ATP-binding</keyword>
<keyword id="KW-0173">Coenzyme A biosynthesis</keyword>
<keyword id="KW-0963">Cytoplasm</keyword>
<keyword id="KW-0460">Magnesium</keyword>
<keyword id="KW-0547">Nucleotide-binding</keyword>
<keyword id="KW-0548">Nucleotidyltransferase</keyword>
<keyword id="KW-1185">Reference proteome</keyword>
<keyword id="KW-0808">Transferase</keyword>
<reference key="1">
    <citation type="submission" date="2007-10" db="EMBL/GenBank/DDBJ databases">
        <title>Complete sequence of Shewanella pealeana ATCC 700345.</title>
        <authorList>
            <consortium name="US DOE Joint Genome Institute"/>
            <person name="Copeland A."/>
            <person name="Lucas S."/>
            <person name="Lapidus A."/>
            <person name="Barry K."/>
            <person name="Glavina del Rio T."/>
            <person name="Dalin E."/>
            <person name="Tice H."/>
            <person name="Pitluck S."/>
            <person name="Chertkov O."/>
            <person name="Brettin T."/>
            <person name="Bruce D."/>
            <person name="Detter J.C."/>
            <person name="Han C."/>
            <person name="Schmutz J."/>
            <person name="Larimer F."/>
            <person name="Land M."/>
            <person name="Hauser L."/>
            <person name="Kyrpides N."/>
            <person name="Kim E."/>
            <person name="Zhao J.-S.Z."/>
            <person name="Manno D."/>
            <person name="Hawari J."/>
            <person name="Richardson P."/>
        </authorList>
    </citation>
    <scope>NUCLEOTIDE SEQUENCE [LARGE SCALE GENOMIC DNA]</scope>
    <source>
        <strain>ATCC 700345 / ANG-SQ1</strain>
    </source>
</reference>
<proteinExistence type="inferred from homology"/>